<sequence length="1060" mass="121182">MILVIAEKPNVARKIAMALAEVKPIKKTLFGVPYYELIRDGKRLIVASAVGHLYGLAPKNDFFGYPIFDVEWVPVYIAEKGKEYAKDYIKLLSVLSKRVREFIVACDYDTEGEVIGYTALKYACGVDPGVAKRMKFSALTKRDLIKAWYNLEPTINFGMANAGIARHILDWYWGVNLSRALTHAIKRASGKWVVLSTGRVQGPTLKFLVDREREIQSFVPQPYWVIKLIFEKNGKKYTANYEKDKIWDENEAKRIVLEVKKAPARVTNIEVKQQNRNPPVPFDLGTLQREAYSAFGFSPKKTLDIAQSLYEKGFCLHPDTLILTSQGVRKIKELSREGEVFALDFNLKLSKAKYRLLERDADEQMYKVTLLDGTELYLTADHPVLVYREGNLAFVPADKLRETDHVVLVLNKSARDNYGFLDLLLEITDSQEDYAILENGETLSLHSLKMLVERGEIKDIAVVGFSHNNFGKVMLRDELWYLIGYLAGKGGEIKGNGVVISSRTKEIVGLTKSLNIDLIETEEGIVLSNKSFVRLLHLIHYTPRVPEVYGIINNTEWLKAFLAGYYDATLLEGLTLEALYKIKVYLQLLGIRAKIEDNKLKVHLEDLQRFRELLGKFSRRKLYVETSQVPVFTDFDERSYDFPRILGGDIYIIGIKSIEKFHYKGKVYDLVVENYHNFIANGIAVHNCSYPRTESQKLPKNLNYKFIIQNLARIPEYRPYAHLLLGMPELKPVEGKKEDPAHPAIYPTGEIPRPGDLTKDEALLYDMIVRRFLAVFMEPAVRETVKVTISAGKHKFFISGGRTVKEGWLRVYGKYVKFDEVTLPTFFIGERIKVLQVKREKKKTKPPARYSPAAVIKKMEDLGLGTKATRAQILETLYQRGYIEGKKSIKVTPLGMKVIETLEKYVPEIISVELTREFEKKMELIMEGKLTKEEVIEEAKIRLTKILEEFKKKELEIGLELAKIVVGEEKPPLIVGKCPKCGGDLIVKYNEKTGKRFVGCSNWPKCNVTYPILQRGEIIPTNKTCCNGAPVVIIREKDGREWEICLDMNCKEYNTIKKKR</sequence>
<organism>
    <name type="scientific">Pyrococcus furiosus (strain ATCC 43587 / DSM 3638 / JCM 8422 / Vc1)</name>
    <dbReference type="NCBI Taxonomy" id="186497"/>
    <lineage>
        <taxon>Archaea</taxon>
        <taxon>Methanobacteriati</taxon>
        <taxon>Methanobacteriota</taxon>
        <taxon>Thermococci</taxon>
        <taxon>Thermococcales</taxon>
        <taxon>Thermococcaceae</taxon>
        <taxon>Pyrococcus</taxon>
    </lineage>
</organism>
<comment type="function">
    <text evidence="1">Releases the supercoiling and torsional tension of DNA, which is introduced during the DNA replication and transcription, by transiently cleaving and rejoining one strand of the DNA duplex. Introduces a single-strand break via transesterification at a target site in duplex DNA. The scissile phosphodiester is attacked by the catalytic tyrosine of the enzyme, resulting in the formation of a DNA-(5'-phosphotyrosyl)-enzyme intermediate and the expulsion of a 3'-OH DNA strand. The free DNA strand then undergoes passage around the unbroken strand, thus removing DNA supercoils. Finally, in the religation step, the DNA 3'-OH attacks the covalent intermediate to expel the active-site tyrosine and restore the DNA phosphodiester backbone (By similarity).</text>
</comment>
<comment type="catalytic activity">
    <reaction>
        <text>ATP-independent breakage of single-stranded DNA, followed by passage and rejoining.</text>
        <dbReference type="EC" id="5.6.2.1"/>
    </reaction>
</comment>
<comment type="cofactor">
    <cofactor evidence="1">
        <name>Mg(2+)</name>
        <dbReference type="ChEBI" id="CHEBI:18420"/>
    </cofactor>
</comment>
<comment type="subunit">
    <text evidence="1">Monomer.</text>
</comment>
<comment type="PTM">
    <text evidence="4">This protein undergoes a protein self splicing that involves a post-translational excision of the intervening region (intein) followed by peptide ligation.</text>
</comment>
<comment type="miscellaneous">
    <text>When a topoisomerase transiently breaks a DNA backbone bond, it simultaneously forms a protein-DNA link, in which a tyrosyl oxygen in the enzyme is joined to a DNA phosphorus at one end of the enzyme-severed DNA strand.</text>
</comment>
<comment type="similarity">
    <text evidence="3 4">Belongs to the type IA topoisomerase family.</text>
</comment>
<feature type="chain" id="PRO_0000034794" description="DNA topoisomerase 1, 1st part">
    <location>
        <begin position="1"/>
        <end position="314"/>
    </location>
</feature>
<feature type="chain" id="PRO_0000034795" description="Endonuclease PI-PfuI" evidence="2">
    <location>
        <begin position="315"/>
        <end position="687"/>
    </location>
</feature>
<feature type="chain" id="PRO_0000034796" description="DNA topoisomerase 1, 2nd part">
    <location>
        <begin position="688"/>
        <end position="1060"/>
    </location>
</feature>
<feature type="domain" description="Toprim">
    <location>
        <begin position="1"/>
        <end position="141"/>
    </location>
</feature>
<feature type="domain" description="Topo IA-type catalytic" evidence="3">
    <location>
        <begin position="156"/>
        <end position="947"/>
    </location>
</feature>
<feature type="domain" description="DOD-type homing endonuclease">
    <location>
        <begin position="482"/>
        <end position="591"/>
    </location>
</feature>
<feature type="zinc finger region" description="C4-type 1">
    <location>
        <begin position="978"/>
        <end position="1006"/>
    </location>
</feature>
<feature type="zinc finger region" description="C4-type 2; atypical">
    <location>
        <begin position="1025"/>
        <end position="1050"/>
    </location>
</feature>
<feature type="region of interest" description="Interaction with DNA" evidence="1">
    <location>
        <begin position="196"/>
        <end position="201"/>
    </location>
</feature>
<feature type="active site" description="O-(5'-phospho-DNA)-tyrosine intermediate" evidence="3">
    <location>
        <position position="690"/>
    </location>
</feature>
<feature type="binding site" evidence="1">
    <location>
        <position position="7"/>
    </location>
    <ligand>
        <name>Mg(2+)</name>
        <dbReference type="ChEBI" id="CHEBI:18420"/>
        <note>catalytic</note>
    </ligand>
</feature>
<feature type="binding site" evidence="1">
    <location>
        <position position="107"/>
    </location>
    <ligand>
        <name>Mg(2+)</name>
        <dbReference type="ChEBI" id="CHEBI:18420"/>
        <note>catalytic</note>
    </ligand>
</feature>
<feature type="site" description="Interaction with DNA" evidence="1">
    <location>
        <position position="52"/>
    </location>
</feature>
<feature type="site" description="Interaction with DNA" evidence="1">
    <location>
        <position position="166"/>
    </location>
</feature>
<feature type="site" description="Interaction with DNA" evidence="1">
    <location>
        <position position="170"/>
    </location>
</feature>
<feature type="site" description="Interaction with DNA" evidence="1">
    <location>
        <position position="692"/>
    </location>
</feature>
<feature type="site" description="Interaction with DNA" evidence="1">
    <location>
        <position position="880"/>
    </location>
</feature>
<feature type="sequence conflict" description="In Ref. 2; AAC26106." evidence="4" ref="2">
    <original>F</original>
    <variation>L</variation>
    <location>
        <position position="218"/>
    </location>
</feature>
<feature type="sequence conflict" description="In Ref. 2; AAC26106." evidence="4" ref="2">
    <original>K</original>
    <variation>E</variation>
    <location>
        <position position="235"/>
    </location>
</feature>
<feature type="sequence conflict" description="In Ref. 2; AAC26106." evidence="4" ref="2">
    <original>S</original>
    <variation>P</variation>
    <location>
        <position position="293"/>
    </location>
</feature>
<name>TOP1_PYRFU</name>
<gene>
    <name type="primary">topA</name>
    <name type="ordered locus">PF0494</name>
</gene>
<evidence type="ECO:0000250" key="1"/>
<evidence type="ECO:0000255" key="2"/>
<evidence type="ECO:0000255" key="3">
    <source>
        <dbReference type="PROSITE-ProRule" id="PRU01383"/>
    </source>
</evidence>
<evidence type="ECO:0000305" key="4"/>
<reference key="1">
    <citation type="journal article" date="1999" name="Genetics">
        <title>Divergence of the hyperthermophilic archaea Pyrococcus furiosus and P. horikoshii inferred from complete genomic sequences.</title>
        <authorList>
            <person name="Maeder D.L."/>
            <person name="Weiss R.B."/>
            <person name="Dunn D.M."/>
            <person name="Cherry J.L."/>
            <person name="Gonzalez J.M."/>
            <person name="DiRuggiero J."/>
            <person name="Robb F.T."/>
        </authorList>
    </citation>
    <scope>NUCLEOTIDE SEQUENCE [LARGE SCALE GENOMIC DNA]</scope>
    <source>
        <strain>ATCC 43587 / DSM 3638 / JCM 8422 / Vc1</strain>
    </source>
</reference>
<reference key="2">
    <citation type="journal article" date="1998" name="Gene">
        <title>A topA intein in Pyrococcus furiosus and its relatedness to the r-gyr intein of Methanococcus jannaschii.</title>
        <authorList>
            <person name="Chute I.C."/>
            <person name="Hu Z."/>
            <person name="Liu X.-Q."/>
        </authorList>
    </citation>
    <scope>NUCLEOTIDE SEQUENCE [GENOMIC DNA] OF 127-1060</scope>
</reference>
<proteinExistence type="inferred from homology"/>
<protein>
    <recommendedName>
        <fullName>DNA topoisomerase 1</fullName>
        <ecNumber>5.6.2.1</ecNumber>
    </recommendedName>
    <alternativeName>
        <fullName>DNA topoisomerase I</fullName>
    </alternativeName>
    <alternativeName>
        <fullName>Omega-protein</fullName>
    </alternativeName>
    <alternativeName>
        <fullName>Relaxing enzyme</fullName>
    </alternativeName>
    <alternativeName>
        <fullName>Swivelase</fullName>
    </alternativeName>
    <alternativeName>
        <fullName>Untwisting enzyme</fullName>
    </alternativeName>
    <component>
        <recommendedName>
            <fullName>Endonuclease PI-PfuI</fullName>
            <ecNumber>3.1.-.-</ecNumber>
        </recommendedName>
        <alternativeName>
            <fullName>Pfu topA intein</fullName>
        </alternativeName>
    </component>
</protein>
<dbReference type="EC" id="5.6.2.1"/>
<dbReference type="EC" id="3.1.-.-"/>
<dbReference type="EMBL" id="AE009950">
    <property type="protein sequence ID" value="AAL80618.1"/>
    <property type="molecule type" value="Genomic_DNA"/>
</dbReference>
<dbReference type="EMBL" id="AF042825">
    <property type="protein sequence ID" value="AAC26106.1"/>
    <property type="molecule type" value="Genomic_DNA"/>
</dbReference>
<dbReference type="RefSeq" id="WP_011011611.1">
    <property type="nucleotide sequence ID" value="NZ_CP023154.1"/>
</dbReference>
<dbReference type="STRING" id="186497.PF0494"/>
<dbReference type="PaxDb" id="186497-PF0494"/>
<dbReference type="GeneID" id="41712296"/>
<dbReference type="KEGG" id="pfu:PF0494"/>
<dbReference type="PATRIC" id="fig|186497.12.peg.517"/>
<dbReference type="eggNOG" id="arCOG01527">
    <property type="taxonomic scope" value="Archaea"/>
</dbReference>
<dbReference type="eggNOG" id="arCOG03151">
    <property type="taxonomic scope" value="Archaea"/>
</dbReference>
<dbReference type="HOGENOM" id="CLU_002929_5_5_2"/>
<dbReference type="OrthoDB" id="30963at2157"/>
<dbReference type="PhylomeDB" id="O73954"/>
<dbReference type="Proteomes" id="UP000001013">
    <property type="component" value="Chromosome"/>
</dbReference>
<dbReference type="GO" id="GO:0005694">
    <property type="term" value="C:chromosome"/>
    <property type="evidence" value="ECO:0007669"/>
    <property type="project" value="InterPro"/>
</dbReference>
<dbReference type="GO" id="GO:0003677">
    <property type="term" value="F:DNA binding"/>
    <property type="evidence" value="ECO:0007669"/>
    <property type="project" value="UniProtKB-KW"/>
</dbReference>
<dbReference type="GO" id="GO:0003917">
    <property type="term" value="F:DNA topoisomerase type I (single strand cut, ATP-independent) activity"/>
    <property type="evidence" value="ECO:0007669"/>
    <property type="project" value="UniProtKB-UniRule"/>
</dbReference>
<dbReference type="GO" id="GO:0004519">
    <property type="term" value="F:endonuclease activity"/>
    <property type="evidence" value="ECO:0007669"/>
    <property type="project" value="UniProtKB-KW"/>
</dbReference>
<dbReference type="GO" id="GO:0008270">
    <property type="term" value="F:zinc ion binding"/>
    <property type="evidence" value="ECO:0007669"/>
    <property type="project" value="UniProtKB-KW"/>
</dbReference>
<dbReference type="GO" id="GO:0006281">
    <property type="term" value="P:DNA repair"/>
    <property type="evidence" value="ECO:0007669"/>
    <property type="project" value="TreeGrafter"/>
</dbReference>
<dbReference type="GO" id="GO:0006265">
    <property type="term" value="P:DNA topological change"/>
    <property type="evidence" value="ECO:0007669"/>
    <property type="project" value="UniProtKB-UniRule"/>
</dbReference>
<dbReference type="GO" id="GO:0016539">
    <property type="term" value="P:intein-mediated protein splicing"/>
    <property type="evidence" value="ECO:0007669"/>
    <property type="project" value="InterPro"/>
</dbReference>
<dbReference type="GO" id="GO:0006314">
    <property type="term" value="P:intron homing"/>
    <property type="evidence" value="ECO:0007669"/>
    <property type="project" value="UniProtKB-KW"/>
</dbReference>
<dbReference type="CDD" id="cd00081">
    <property type="entry name" value="Hint"/>
    <property type="match status" value="2"/>
</dbReference>
<dbReference type="CDD" id="cd00186">
    <property type="entry name" value="TOP1Ac"/>
    <property type="match status" value="1"/>
</dbReference>
<dbReference type="CDD" id="cd03362">
    <property type="entry name" value="TOPRIM_TopoIA_TopoIII"/>
    <property type="match status" value="1"/>
</dbReference>
<dbReference type="FunFam" id="1.10.460.10:FF:000018">
    <property type="entry name" value="DNA topoisomerase 1"/>
    <property type="match status" value="1"/>
</dbReference>
<dbReference type="Gene3D" id="3.40.50.140">
    <property type="match status" value="1"/>
</dbReference>
<dbReference type="Gene3D" id="3.30.65.10">
    <property type="entry name" value="Bacterial Topoisomerase I, domain 1"/>
    <property type="match status" value="1"/>
</dbReference>
<dbReference type="Gene3D" id="2.170.16.10">
    <property type="entry name" value="Hedgehog/Intein (Hint) domain"/>
    <property type="match status" value="1"/>
</dbReference>
<dbReference type="Gene3D" id="1.10.460.10">
    <property type="entry name" value="Topoisomerase I, domain 2"/>
    <property type="match status" value="2"/>
</dbReference>
<dbReference type="Gene3D" id="2.70.20.10">
    <property type="entry name" value="Topoisomerase I, domain 3"/>
    <property type="match status" value="1"/>
</dbReference>
<dbReference type="Gene3D" id="1.10.290.10">
    <property type="entry name" value="Topoisomerase I, domain 4"/>
    <property type="match status" value="2"/>
</dbReference>
<dbReference type="HAMAP" id="MF_00952">
    <property type="entry name" value="Topoisom_1_prok"/>
    <property type="match status" value="1"/>
</dbReference>
<dbReference type="InterPro" id="IPR003586">
    <property type="entry name" value="Hint_dom_C"/>
</dbReference>
<dbReference type="InterPro" id="IPR003587">
    <property type="entry name" value="Hint_dom_N"/>
</dbReference>
<dbReference type="InterPro" id="IPR036844">
    <property type="entry name" value="Hint_dom_sf"/>
</dbReference>
<dbReference type="InterPro" id="IPR006142">
    <property type="entry name" value="INTEIN"/>
</dbReference>
<dbReference type="InterPro" id="IPR030934">
    <property type="entry name" value="Intein_C"/>
</dbReference>
<dbReference type="InterPro" id="IPR004042">
    <property type="entry name" value="Intein_endonuc_central"/>
</dbReference>
<dbReference type="InterPro" id="IPR006141">
    <property type="entry name" value="Intein_N"/>
</dbReference>
<dbReference type="InterPro" id="IPR000380">
    <property type="entry name" value="Topo_IA"/>
</dbReference>
<dbReference type="InterPro" id="IPR003601">
    <property type="entry name" value="Topo_IA_2"/>
</dbReference>
<dbReference type="InterPro" id="IPR013497">
    <property type="entry name" value="Topo_IA_cen"/>
</dbReference>
<dbReference type="InterPro" id="IPR013824">
    <property type="entry name" value="Topo_IA_cen_sub1"/>
</dbReference>
<dbReference type="InterPro" id="IPR013825">
    <property type="entry name" value="Topo_IA_cen_sub2"/>
</dbReference>
<dbReference type="InterPro" id="IPR013826">
    <property type="entry name" value="Topo_IA_cen_sub3"/>
</dbReference>
<dbReference type="InterPro" id="IPR023405">
    <property type="entry name" value="Topo_IA_core_domain"/>
</dbReference>
<dbReference type="InterPro" id="IPR003602">
    <property type="entry name" value="Topo_IA_DNA-bd_dom"/>
</dbReference>
<dbReference type="InterPro" id="IPR013498">
    <property type="entry name" value="Topo_IA_Znf"/>
</dbReference>
<dbReference type="InterPro" id="IPR005739">
    <property type="entry name" value="TopoI_arch"/>
</dbReference>
<dbReference type="InterPro" id="IPR028612">
    <property type="entry name" value="Topoisom_1_IA"/>
</dbReference>
<dbReference type="InterPro" id="IPR006171">
    <property type="entry name" value="TOPRIM_dom"/>
</dbReference>
<dbReference type="InterPro" id="IPR034144">
    <property type="entry name" value="TOPRIM_TopoIII"/>
</dbReference>
<dbReference type="NCBIfam" id="TIGR01443">
    <property type="entry name" value="intein_Cterm"/>
    <property type="match status" value="1"/>
</dbReference>
<dbReference type="NCBIfam" id="TIGR01445">
    <property type="entry name" value="intein_Nterm"/>
    <property type="match status" value="1"/>
</dbReference>
<dbReference type="NCBIfam" id="TIGR01057">
    <property type="entry name" value="topA_arch"/>
    <property type="match status" value="2"/>
</dbReference>
<dbReference type="PANTHER" id="PTHR11390:SF26">
    <property type="entry name" value="DNA TOPOISOMERASE 1"/>
    <property type="match status" value="1"/>
</dbReference>
<dbReference type="PANTHER" id="PTHR11390">
    <property type="entry name" value="PROKARYOTIC DNA TOPOISOMERASE"/>
    <property type="match status" value="1"/>
</dbReference>
<dbReference type="Pfam" id="PF14890">
    <property type="entry name" value="Intein_splicing"/>
    <property type="match status" value="1"/>
</dbReference>
<dbReference type="Pfam" id="PF01131">
    <property type="entry name" value="Topoisom_bac"/>
    <property type="match status" value="2"/>
</dbReference>
<dbReference type="Pfam" id="PF01751">
    <property type="entry name" value="Toprim"/>
    <property type="match status" value="1"/>
</dbReference>
<dbReference type="Pfam" id="PF01396">
    <property type="entry name" value="Zn_ribbon_Top1"/>
    <property type="match status" value="1"/>
</dbReference>
<dbReference type="PRINTS" id="PR00379">
    <property type="entry name" value="INTEIN"/>
</dbReference>
<dbReference type="PRINTS" id="PR00417">
    <property type="entry name" value="PRTPISMRASEI"/>
</dbReference>
<dbReference type="SMART" id="SM00305">
    <property type="entry name" value="HintC"/>
    <property type="match status" value="1"/>
</dbReference>
<dbReference type="SMART" id="SM00306">
    <property type="entry name" value="HintN"/>
    <property type="match status" value="1"/>
</dbReference>
<dbReference type="SMART" id="SM00437">
    <property type="entry name" value="TOP1Ac"/>
    <property type="match status" value="1"/>
</dbReference>
<dbReference type="SMART" id="SM00436">
    <property type="entry name" value="TOP1Bc"/>
    <property type="match status" value="1"/>
</dbReference>
<dbReference type="SMART" id="SM00493">
    <property type="entry name" value="TOPRIM"/>
    <property type="match status" value="1"/>
</dbReference>
<dbReference type="SUPFAM" id="SSF51294">
    <property type="entry name" value="Hedgehog/intein (Hint) domain"/>
    <property type="match status" value="1"/>
</dbReference>
<dbReference type="SUPFAM" id="SSF56712">
    <property type="entry name" value="Prokaryotic type I DNA topoisomerase"/>
    <property type="match status" value="2"/>
</dbReference>
<dbReference type="PROSITE" id="PS50818">
    <property type="entry name" value="INTEIN_C_TER"/>
    <property type="match status" value="1"/>
</dbReference>
<dbReference type="PROSITE" id="PS50819">
    <property type="entry name" value="INTEIN_ENDONUCLEASE"/>
    <property type="match status" value="1"/>
</dbReference>
<dbReference type="PROSITE" id="PS50817">
    <property type="entry name" value="INTEIN_N_TER"/>
    <property type="match status" value="1"/>
</dbReference>
<dbReference type="PROSITE" id="PS52039">
    <property type="entry name" value="TOPO_IA_2"/>
    <property type="match status" value="1"/>
</dbReference>
<dbReference type="PROSITE" id="PS50880">
    <property type="entry name" value="TOPRIM"/>
    <property type="match status" value="1"/>
</dbReference>
<keyword id="KW-0068">Autocatalytic cleavage</keyword>
<keyword id="KW-0238">DNA-binding</keyword>
<keyword id="KW-0255">Endonuclease</keyword>
<keyword id="KW-0378">Hydrolase</keyword>
<keyword id="KW-0404">Intron homing</keyword>
<keyword id="KW-0413">Isomerase</keyword>
<keyword id="KW-0460">Magnesium</keyword>
<keyword id="KW-0479">Metal-binding</keyword>
<keyword id="KW-0540">Nuclease</keyword>
<keyword id="KW-0651">Protein splicing</keyword>
<keyword id="KW-1185">Reference proteome</keyword>
<keyword id="KW-0677">Repeat</keyword>
<keyword id="KW-0799">Topoisomerase</keyword>
<keyword id="KW-0862">Zinc</keyword>
<keyword id="KW-0863">Zinc-finger</keyword>
<accession>O73954</accession>